<protein>
    <recommendedName>
        <fullName>Poly(A) polymerase type 3</fullName>
        <shortName>PAP</shortName>
        <ecNumber>2.7.7.19</ecNumber>
    </recommendedName>
    <alternativeName>
        <fullName>Polynucleotide adenylyltransferase</fullName>
    </alternativeName>
</protein>
<organism>
    <name type="scientific">Xenopus laevis</name>
    <name type="common">African clawed frog</name>
    <dbReference type="NCBI Taxonomy" id="8355"/>
    <lineage>
        <taxon>Eukaryota</taxon>
        <taxon>Metazoa</taxon>
        <taxon>Chordata</taxon>
        <taxon>Craniata</taxon>
        <taxon>Vertebrata</taxon>
        <taxon>Euteleostomi</taxon>
        <taxon>Amphibia</taxon>
        <taxon>Batrachia</taxon>
        <taxon>Anura</taxon>
        <taxon>Pipoidea</taxon>
        <taxon>Pipidae</taxon>
        <taxon>Xenopodinae</taxon>
        <taxon>Xenopus</taxon>
        <taxon>Xenopus</taxon>
    </lineage>
</organism>
<comment type="function">
    <text>Polymerase that creates the 3'-poly(A) tail of mRNA's. May acquire specificity through interaction with a cleavage and polyadenylation factor (CPSF).</text>
</comment>
<comment type="catalytic activity">
    <reaction>
        <text>RNA(n) + ATP = RNA(n)-3'-adenine ribonucleotide + diphosphate</text>
        <dbReference type="Rhea" id="RHEA:11332"/>
        <dbReference type="Rhea" id="RHEA-COMP:14527"/>
        <dbReference type="Rhea" id="RHEA-COMP:17347"/>
        <dbReference type="ChEBI" id="CHEBI:30616"/>
        <dbReference type="ChEBI" id="CHEBI:33019"/>
        <dbReference type="ChEBI" id="CHEBI:140395"/>
        <dbReference type="ChEBI" id="CHEBI:173115"/>
        <dbReference type="EC" id="2.7.7.19"/>
    </reaction>
</comment>
<comment type="cofactor">
    <cofactor evidence="1">
        <name>Mg(2+)</name>
        <dbReference type="ChEBI" id="CHEBI:18420"/>
    </cofactor>
    <cofactor evidence="1">
        <name>Mn(2+)</name>
        <dbReference type="ChEBI" id="CHEBI:29035"/>
    </cofactor>
    <text evidence="1">Binds 2 magnesium ions. Also active with manganese.</text>
</comment>
<comment type="subunit">
    <text evidence="1">Monomer.</text>
</comment>
<comment type="subcellular location">
    <subcellularLocation>
        <location>Nucleus</location>
    </subcellularLocation>
</comment>
<comment type="similarity">
    <text evidence="2">Belongs to the poly(A) polymerase family.</text>
</comment>
<reference key="1">
    <citation type="journal article" date="1995" name="RNA">
        <title>Poly(A) polymerases in the nucleus and cytoplasm of frog oocytes: dynamic changes during oocyte maturation and early development.</title>
        <authorList>
            <person name="Ballantyne S."/>
            <person name="Bilger A."/>
            <person name="Astrom J."/>
            <person name="Virtanen A."/>
            <person name="Wickens M."/>
        </authorList>
    </citation>
    <scope>NUCLEOTIDE SEQUENCE [MRNA]</scope>
    <source>
        <tissue>Ovary</tissue>
    </source>
</reference>
<reference key="2">
    <citation type="journal article" date="1995" name="Mol. Cell. Biol.">
        <title>Cloning and characterization of a Xenopus poly(A) polymerase.</title>
        <authorList>
            <person name="Gebauer F."/>
            <person name="Richter J.D."/>
        </authorList>
    </citation>
    <scope>NUCLEOTIDE SEQUENCE [MRNA] OF 1-394</scope>
    <source>
        <tissue>Ovary</tissue>
    </source>
</reference>
<name>PAPO3_XENLA</name>
<feature type="chain" id="PRO_0000051616" description="Poly(A) polymerase type 3">
    <location>
        <begin position="1"/>
        <end position="400" status="greater than"/>
    </location>
</feature>
<feature type="short sequence motif" description="Nuclear localization signal" evidence="1">
    <location>
        <begin position="382"/>
        <end position="390"/>
    </location>
</feature>
<feature type="binding site" evidence="1">
    <location>
        <begin position="97"/>
        <end position="99"/>
    </location>
    <ligand>
        <name>ATP</name>
        <dbReference type="ChEBI" id="CHEBI:30616"/>
    </ligand>
</feature>
<feature type="binding site" evidence="1">
    <location>
        <position position="106"/>
    </location>
    <ligand>
        <name>ATP</name>
        <dbReference type="ChEBI" id="CHEBI:30616"/>
    </ligand>
</feature>
<feature type="binding site" evidence="1">
    <location>
        <begin position="110"/>
        <end position="112"/>
    </location>
    <ligand>
        <name>ATP</name>
        <dbReference type="ChEBI" id="CHEBI:30616"/>
    </ligand>
</feature>
<feature type="binding site" evidence="1">
    <location>
        <position position="110"/>
    </location>
    <ligand>
        <name>Mg(2+)</name>
        <dbReference type="ChEBI" id="CHEBI:18420"/>
        <label>1</label>
        <note>catalytic</note>
    </ligand>
</feature>
<feature type="binding site" evidence="1">
    <location>
        <position position="110"/>
    </location>
    <ligand>
        <name>Mg(2+)</name>
        <dbReference type="ChEBI" id="CHEBI:18420"/>
        <label>2</label>
        <note>catalytic</note>
    </ligand>
</feature>
<feature type="binding site" evidence="1">
    <location>
        <position position="112"/>
    </location>
    <ligand>
        <name>Mg(2+)</name>
        <dbReference type="ChEBI" id="CHEBI:18420"/>
        <label>1</label>
        <note>catalytic</note>
    </ligand>
</feature>
<feature type="binding site" evidence="1">
    <location>
        <position position="112"/>
    </location>
    <ligand>
        <name>Mg(2+)</name>
        <dbReference type="ChEBI" id="CHEBI:18420"/>
        <label>2</label>
        <note>catalytic</note>
    </ligand>
</feature>
<feature type="binding site" evidence="1">
    <location>
        <position position="164"/>
    </location>
    <ligand>
        <name>ATP</name>
        <dbReference type="ChEBI" id="CHEBI:30616"/>
    </ligand>
</feature>
<feature type="binding site" evidence="1">
    <location>
        <position position="164"/>
    </location>
    <ligand>
        <name>Mg(2+)</name>
        <dbReference type="ChEBI" id="CHEBI:18420"/>
        <label>2</label>
        <note>catalytic</note>
    </ligand>
</feature>
<feature type="binding site" evidence="1">
    <location>
        <position position="225"/>
    </location>
    <ligand>
        <name>ATP</name>
        <dbReference type="ChEBI" id="CHEBI:30616"/>
    </ligand>
</feature>
<feature type="binding site" evidence="1">
    <location>
        <position position="234"/>
    </location>
    <ligand>
        <name>ATP</name>
        <dbReference type="ChEBI" id="CHEBI:30616"/>
    </ligand>
</feature>
<feature type="binding site" evidence="1">
    <location>
        <begin position="243"/>
        <end position="244"/>
    </location>
    <ligand>
        <name>ATP</name>
        <dbReference type="ChEBI" id="CHEBI:30616"/>
    </ligand>
</feature>
<feature type="sequence conflict" description="In Ref. 2; AAA64708." evidence="2" ref="2">
    <original>S</original>
    <variation>I</variation>
    <location>
        <position position="61"/>
    </location>
</feature>
<feature type="sequence conflict" description="In Ref. 2; AAA64708." evidence="2" ref="2">
    <original>L</original>
    <variation>F</variation>
    <location>
        <position position="126"/>
    </location>
</feature>
<feature type="non-terminal residue">
    <location>
        <position position="400"/>
    </location>
</feature>
<accession>P51006</accession>
<accession>Q91602</accession>
<evidence type="ECO:0000250" key="1"/>
<evidence type="ECO:0000305" key="2"/>
<keyword id="KW-0067">ATP-binding</keyword>
<keyword id="KW-0460">Magnesium</keyword>
<keyword id="KW-0464">Manganese</keyword>
<keyword id="KW-0479">Metal-binding</keyword>
<keyword id="KW-0507">mRNA processing</keyword>
<keyword id="KW-0547">Nucleotide-binding</keyword>
<keyword id="KW-0539">Nucleus</keyword>
<keyword id="KW-1185">Reference proteome</keyword>
<keyword id="KW-0694">RNA-binding</keyword>
<keyword id="KW-0808">Transferase</keyword>
<sequence length="400" mass="46020">MPFPLASQGSQQSQKTYGITSPISLATPKDTDCTLTQKLIETLKPYGVFEEEDELQHRILSLGKLNNLVKEWIREISELKNLPQSVIENVGGKIFTFGSYRLGVHTKGADIDALCVAPRHVDRSDLFSSFYEKLKQQEEVKDLRSVEEAFVPVIKLCFDGIEIDILFARLALQTIPEDLDLRDDSLLKNLDIRCIRSLNGCRVTDEILHLVPNIDSFRLTLRAIKLWAKRHNIYSNILGFLGGVSWAMLVARTCQLYPNAIASTLVHKFFLVFSKWEWPNPVLLKQPEECNLNLPVWDPRVNPSDRYHLMPIITPAYPQQNSTYNVSVSTRAVMVEEFKQGLAITDEILLLKAEWSKLFDAPNFFQKYKYVFYNLLAMFAWGEIINKNKKRCYTLKKKKK</sequence>
<dbReference type="EC" id="2.7.7.19"/>
<dbReference type="EMBL" id="U19975">
    <property type="protein sequence ID" value="AAC59747.1"/>
    <property type="molecule type" value="mRNA"/>
</dbReference>
<dbReference type="EMBL" id="U23456">
    <property type="protein sequence ID" value="AAA64708.1"/>
    <property type="molecule type" value="mRNA"/>
</dbReference>
<dbReference type="PIR" id="I51681">
    <property type="entry name" value="I51681"/>
</dbReference>
<dbReference type="SMR" id="P51006"/>
<dbReference type="AGR" id="Xenbase:XB-GENE-944355"/>
<dbReference type="Xenbase" id="XB-GENE-944355">
    <property type="gene designation" value="papola.L"/>
</dbReference>
<dbReference type="Proteomes" id="UP000186698">
    <property type="component" value="Unplaced"/>
</dbReference>
<dbReference type="GO" id="GO:0005634">
    <property type="term" value="C:nucleus"/>
    <property type="evidence" value="ECO:0000318"/>
    <property type="project" value="GO_Central"/>
</dbReference>
<dbReference type="GO" id="GO:0005524">
    <property type="term" value="F:ATP binding"/>
    <property type="evidence" value="ECO:0007669"/>
    <property type="project" value="UniProtKB-KW"/>
</dbReference>
<dbReference type="GO" id="GO:0046872">
    <property type="term" value="F:metal ion binding"/>
    <property type="evidence" value="ECO:0007669"/>
    <property type="project" value="UniProtKB-KW"/>
</dbReference>
<dbReference type="GO" id="GO:1990817">
    <property type="term" value="F:poly(A) RNA polymerase activity"/>
    <property type="evidence" value="ECO:0000318"/>
    <property type="project" value="GO_Central"/>
</dbReference>
<dbReference type="GO" id="GO:0003723">
    <property type="term" value="F:RNA binding"/>
    <property type="evidence" value="ECO:0007669"/>
    <property type="project" value="UniProtKB-KW"/>
</dbReference>
<dbReference type="GO" id="GO:0006397">
    <property type="term" value="P:mRNA processing"/>
    <property type="evidence" value="ECO:0007669"/>
    <property type="project" value="UniProtKB-KW"/>
</dbReference>
<dbReference type="CDD" id="cd05402">
    <property type="entry name" value="NT_PAP_TUTase"/>
    <property type="match status" value="1"/>
</dbReference>
<dbReference type="FunFam" id="3.30.460.10:FF:000002">
    <property type="entry name" value="Poly(A) polymerase alpha, putative"/>
    <property type="match status" value="1"/>
</dbReference>
<dbReference type="FunFam" id="1.10.1410.10:FF:000001">
    <property type="entry name" value="Putative poly(A) polymerase gamma"/>
    <property type="match status" value="1"/>
</dbReference>
<dbReference type="Gene3D" id="1.10.1410.10">
    <property type="match status" value="1"/>
</dbReference>
<dbReference type="Gene3D" id="3.30.460.10">
    <property type="entry name" value="Beta Polymerase, domain 2"/>
    <property type="match status" value="1"/>
</dbReference>
<dbReference type="InterPro" id="IPR043519">
    <property type="entry name" value="NT_sf"/>
</dbReference>
<dbReference type="InterPro" id="IPR007012">
    <property type="entry name" value="PolA_pol_cen_dom"/>
</dbReference>
<dbReference type="InterPro" id="IPR048840">
    <property type="entry name" value="PolA_pol_NTPase"/>
</dbReference>
<dbReference type="InterPro" id="IPR014492">
    <property type="entry name" value="PolyA_polymerase"/>
</dbReference>
<dbReference type="PANTHER" id="PTHR10682">
    <property type="entry name" value="POLY A POLYMERASE"/>
    <property type="match status" value="1"/>
</dbReference>
<dbReference type="PANTHER" id="PTHR10682:SF9">
    <property type="entry name" value="POLY(A) POLYMERASE ALPHA"/>
    <property type="match status" value="1"/>
</dbReference>
<dbReference type="Pfam" id="PF04928">
    <property type="entry name" value="PAP_central"/>
    <property type="match status" value="1"/>
</dbReference>
<dbReference type="Pfam" id="PF20750">
    <property type="entry name" value="PAP_NTPase"/>
    <property type="match status" value="1"/>
</dbReference>
<dbReference type="PIRSF" id="PIRSF018425">
    <property type="entry name" value="PolyA_polymerase"/>
    <property type="match status" value="1"/>
</dbReference>
<dbReference type="SUPFAM" id="SSF81301">
    <property type="entry name" value="Nucleotidyltransferase"/>
    <property type="match status" value="1"/>
</dbReference>
<dbReference type="SUPFAM" id="SSF81631">
    <property type="entry name" value="PAP/OAS1 substrate-binding domain"/>
    <property type="match status" value="1"/>
</dbReference>
<proteinExistence type="evidence at transcript level"/>